<feature type="chain" id="PRO_0000076934" description="Galectin-4">
    <location>
        <begin position="1"/>
        <end position="323"/>
    </location>
</feature>
<feature type="domain" description="Galectin 1" evidence="3">
    <location>
        <begin position="19"/>
        <end position="150"/>
    </location>
</feature>
<feature type="domain" description="Galectin 2" evidence="3">
    <location>
        <begin position="194"/>
        <end position="323"/>
    </location>
</feature>
<feature type="binding site" evidence="1">
    <location>
        <begin position="256"/>
        <end position="262"/>
    </location>
    <ligand>
        <name>a beta-D-galactoside</name>
        <dbReference type="ChEBI" id="CHEBI:28034"/>
    </ligand>
</feature>
<feature type="modified residue" description="Phosphoserine" evidence="2">
    <location>
        <position position="258"/>
    </location>
</feature>
<feature type="sequence variant" id="VAR_049769" description="In dbSNP:rs8106404.">
    <original>T</original>
    <variation>M</variation>
    <location>
        <position position="16"/>
    </location>
</feature>
<feature type="strand" evidence="4">
    <location>
        <begin position="12"/>
        <end position="14"/>
    </location>
</feature>
<feature type="strand" evidence="4">
    <location>
        <begin position="17"/>
        <end position="22"/>
    </location>
</feature>
<feature type="strand" evidence="4">
    <location>
        <begin position="32"/>
        <end position="38"/>
    </location>
</feature>
<feature type="strand" evidence="4">
    <location>
        <begin position="46"/>
        <end position="55"/>
    </location>
</feature>
<feature type="strand" evidence="4">
    <location>
        <begin position="60"/>
        <end position="67"/>
    </location>
</feature>
<feature type="strand" evidence="4">
    <location>
        <begin position="69"/>
        <end position="71"/>
    </location>
</feature>
<feature type="strand" evidence="4">
    <location>
        <begin position="73"/>
        <end position="80"/>
    </location>
</feature>
<feature type="strand" evidence="4">
    <location>
        <begin position="88"/>
        <end position="91"/>
    </location>
</feature>
<feature type="strand" evidence="4">
    <location>
        <begin position="100"/>
        <end position="107"/>
    </location>
</feature>
<feature type="strand" evidence="4">
    <location>
        <begin position="109"/>
        <end position="116"/>
    </location>
</feature>
<feature type="strand" evidence="4">
    <location>
        <begin position="119"/>
        <end position="125"/>
    </location>
</feature>
<feature type="helix" evidence="4">
    <location>
        <begin position="130"/>
        <end position="132"/>
    </location>
</feature>
<feature type="strand" evidence="4">
    <location>
        <begin position="135"/>
        <end position="150"/>
    </location>
</feature>
<feature type="strand" evidence="6">
    <location>
        <begin position="187"/>
        <end position="189"/>
    </location>
</feature>
<feature type="strand" evidence="6">
    <location>
        <begin position="192"/>
        <end position="197"/>
    </location>
</feature>
<feature type="strand" evidence="6">
    <location>
        <begin position="206"/>
        <end position="213"/>
    </location>
</feature>
<feature type="strand" evidence="6">
    <location>
        <begin position="220"/>
        <end position="226"/>
    </location>
</feature>
<feature type="turn" evidence="5">
    <location>
        <begin position="228"/>
        <end position="230"/>
    </location>
</feature>
<feature type="strand" evidence="6">
    <location>
        <begin position="233"/>
        <end position="240"/>
    </location>
</feature>
<feature type="turn" evidence="6">
    <location>
        <begin position="241"/>
        <end position="244"/>
    </location>
</feature>
<feature type="strand" evidence="6">
    <location>
        <begin position="245"/>
        <end position="251"/>
    </location>
</feature>
<feature type="strand" evidence="6">
    <location>
        <begin position="273"/>
        <end position="280"/>
    </location>
</feature>
<feature type="strand" evidence="6">
    <location>
        <begin position="282"/>
        <end position="289"/>
    </location>
</feature>
<feature type="strand" evidence="6">
    <location>
        <begin position="292"/>
        <end position="298"/>
    </location>
</feature>
<feature type="strand" evidence="6">
    <location>
        <begin position="300"/>
        <end position="302"/>
    </location>
</feature>
<feature type="helix" evidence="6">
    <location>
        <begin position="304"/>
        <end position="306"/>
    </location>
</feature>
<feature type="strand" evidence="6">
    <location>
        <begin position="309"/>
        <end position="315"/>
    </location>
</feature>
<feature type="strand" evidence="6">
    <location>
        <begin position="317"/>
        <end position="322"/>
    </location>
</feature>
<protein>
    <recommendedName>
        <fullName>Galectin-4</fullName>
        <shortName>Gal-4</shortName>
    </recommendedName>
    <alternativeName>
        <fullName>Antigen NY-CO-27</fullName>
    </alternativeName>
    <alternativeName>
        <fullName>L-36 lactose-binding protein</fullName>
        <shortName>L36LBP</shortName>
    </alternativeName>
    <alternativeName>
        <fullName>Lactose-binding lectin 4</fullName>
    </alternativeName>
</protein>
<sequence>MAYVPAPGYQPTYNPTLPYYQPIPGGLNVGMSVYIQGVASEHMKRFFVNFVVGQDPGSDVAFHFNPRFDGWDKVVFNTLQGGKWGSEERKRSMPFKKGAAFELVFIVLAEHYKVVVNGNPFYEYGHRLPLQMVTHLQVDGDLQLQSINFIGGQPLRPQGPPMMPPYPGPGHCHQQLNSLPTMEGPPTFNPPVPYFGRLQGGLTARRTIIIKGYVPPTGKSFAINFKVGSSGDIALHINPRMGNGTVVRNSLLNGSWGSEEKKITHNPFGPGQFFDLSIRCGLDRFKVYANGQHLFDFAHRLSAFQRVDTLEIQGDVTLSYVQI</sequence>
<gene>
    <name type="primary">LGALS4</name>
</gene>
<name>LEG4_HUMAN</name>
<organism>
    <name type="scientific">Homo sapiens</name>
    <name type="common">Human</name>
    <dbReference type="NCBI Taxonomy" id="9606"/>
    <lineage>
        <taxon>Eukaryota</taxon>
        <taxon>Metazoa</taxon>
        <taxon>Chordata</taxon>
        <taxon>Craniata</taxon>
        <taxon>Vertebrata</taxon>
        <taxon>Euteleostomi</taxon>
        <taxon>Mammalia</taxon>
        <taxon>Eutheria</taxon>
        <taxon>Euarchontoglires</taxon>
        <taxon>Primates</taxon>
        <taxon>Haplorrhini</taxon>
        <taxon>Catarrhini</taxon>
        <taxon>Hominidae</taxon>
        <taxon>Homo</taxon>
    </lineage>
</organism>
<comment type="function">
    <text>Galectin that binds lactose and a related range of sugars. May be involved in the assembly of adherens junctions.</text>
</comment>
<comment type="subunit">
    <text evidence="1">Monomer.</text>
</comment>
<comment type="interaction">
    <interactant intactId="EBI-720805">
        <id>P56470</id>
    </interactant>
    <interactant intactId="EBI-11524452">
        <id>Q8N9N5-2</id>
        <label>BANP</label>
    </interactant>
    <organismsDiffer>false</organismsDiffer>
    <experiments>3</experiments>
</comment>
<comment type="interaction">
    <interactant intactId="EBI-720805">
        <id>P56470</id>
    </interactant>
    <interactant intactId="EBI-747776">
        <id>Q53EZ4</id>
        <label>CEP55</label>
    </interactant>
    <organismsDiffer>false</organismsDiffer>
    <experiments>3</experiments>
</comment>
<comment type="interaction">
    <interactant intactId="EBI-720805">
        <id>P56470</id>
    </interactant>
    <interactant intactId="EBI-12807776">
        <id>O00167-2</id>
        <label>EYA2</label>
    </interactant>
    <organismsDiffer>false</organismsDiffer>
    <experiments>3</experiments>
</comment>
<comment type="interaction">
    <interactant intactId="EBI-720805">
        <id>P56470</id>
    </interactant>
    <interactant intactId="EBI-5916454">
        <id>A6NEM1</id>
        <label>GOLGA6L9</label>
    </interactant>
    <organismsDiffer>false</organismsDiffer>
    <experiments>3</experiments>
</comment>
<comment type="interaction">
    <interactant intactId="EBI-720805">
        <id>P56470</id>
    </interactant>
    <interactant intactId="EBI-740785">
        <id>P49639</id>
        <label>HOXA1</label>
    </interactant>
    <organismsDiffer>false</organismsDiffer>
    <experiments>3</experiments>
</comment>
<comment type="interaction">
    <interactant intactId="EBI-720805">
        <id>P56470</id>
    </interactant>
    <interactant intactId="EBI-7116203">
        <id>O75031</id>
        <label>HSF2BP</label>
    </interactant>
    <organismsDiffer>false</organismsDiffer>
    <experiments>3</experiments>
</comment>
<comment type="interaction">
    <interactant intactId="EBI-720805">
        <id>P56470</id>
    </interactant>
    <interactant intactId="EBI-1052037">
        <id>Q8IUC1</id>
        <label>KRTAP11-1</label>
    </interactant>
    <organismsDiffer>false</organismsDiffer>
    <experiments>3</experiments>
</comment>
<comment type="interaction">
    <interactant intactId="EBI-720805">
        <id>P56470</id>
    </interactant>
    <interactant intactId="EBI-10963850">
        <id>Q9NZQ3-3</id>
        <label>NCKIPSD</label>
    </interactant>
    <organismsDiffer>false</organismsDiffer>
    <experiments>3</experiments>
</comment>
<comment type="interaction">
    <interactant intactId="EBI-720805">
        <id>P56470</id>
    </interactant>
    <interactant intactId="EBI-746118">
        <id>Q8HWS3</id>
        <label>RFX6</label>
    </interactant>
    <organismsDiffer>false</organismsDiffer>
    <experiments>3</experiments>
</comment>
<comment type="interaction">
    <interactant intactId="EBI-720805">
        <id>P56470</id>
    </interactant>
    <interactant intactId="EBI-44446483">
        <id>Q9HAS3</id>
        <label>SLC28A3</label>
    </interactant>
    <organismsDiffer>false</organismsDiffer>
    <experiments>4</experiments>
</comment>
<comment type="interaction">
    <interactant intactId="EBI-720805">
        <id>P56470</id>
    </interactant>
    <interactant intactId="EBI-12827077">
        <id>Q6N022</id>
        <label>TENM4</label>
    </interactant>
    <organismsDiffer>false</organismsDiffer>
    <experiments>3</experiments>
</comment>
<comment type="interaction">
    <interactant intactId="EBI-720805">
        <id>P56470</id>
    </interactant>
    <interactant intactId="EBI-12815137">
        <id>Q96NM4-3</id>
        <label>TOX2</label>
    </interactant>
    <organismsDiffer>false</organismsDiffer>
    <experiments>3</experiments>
</comment>
<comment type="domain">
    <text>Contains two homologous but distinct carbohydrate-binding domains.</text>
</comment>
<comment type="online information" name="Functional Glycomics Gateway - Glycan Binding">
    <link uri="http://www.functionalglycomics.org/glycomics/GBPServlet?&amp;operationType=view&amp;cbpId=cbp_hum_Stlect_00119"/>
    <text>Galectin-4</text>
</comment>
<proteinExistence type="evidence at protein level"/>
<evidence type="ECO:0000250" key="1"/>
<evidence type="ECO:0000250" key="2">
    <source>
        <dbReference type="UniProtKB" id="P38552"/>
    </source>
</evidence>
<evidence type="ECO:0000255" key="3">
    <source>
        <dbReference type="PROSITE-ProRule" id="PRU00639"/>
    </source>
</evidence>
<evidence type="ECO:0007829" key="4">
    <source>
        <dbReference type="PDB" id="4XZP"/>
    </source>
</evidence>
<evidence type="ECO:0007829" key="5">
    <source>
        <dbReference type="PDB" id="4YM3"/>
    </source>
</evidence>
<evidence type="ECO:0007829" key="6">
    <source>
        <dbReference type="PDB" id="5CBL"/>
    </source>
</evidence>
<accession>P56470</accession>
<dbReference type="EMBL" id="AB006781">
    <property type="protein sequence ID" value="BAA22165.1"/>
    <property type="molecule type" value="mRNA"/>
</dbReference>
<dbReference type="EMBL" id="AF014838">
    <property type="protein sequence ID" value="AAC51763.1"/>
    <property type="molecule type" value="mRNA"/>
</dbReference>
<dbReference type="EMBL" id="U82953">
    <property type="protein sequence ID" value="AAB86590.1"/>
    <property type="molecule type" value="mRNA"/>
</dbReference>
<dbReference type="EMBL" id="BC003661">
    <property type="protein sequence ID" value="AAH03661.1"/>
    <property type="molecule type" value="mRNA"/>
</dbReference>
<dbReference type="EMBL" id="BC005146">
    <property type="protein sequence ID" value="AAH05146.1"/>
    <property type="molecule type" value="mRNA"/>
</dbReference>
<dbReference type="EMBL" id="BC034750">
    <property type="protein sequence ID" value="AAH34750.1"/>
    <property type="molecule type" value="mRNA"/>
</dbReference>
<dbReference type="CCDS" id="CCDS12521.1"/>
<dbReference type="RefSeq" id="NP_006140.1">
    <property type="nucleotide sequence ID" value="NM_006149.4"/>
</dbReference>
<dbReference type="PDB" id="1X50">
    <property type="method" value="NMR"/>
    <property type="chains" value="A=173-323"/>
</dbReference>
<dbReference type="PDB" id="4XZP">
    <property type="method" value="X-ray"/>
    <property type="resolution" value="1.48 A"/>
    <property type="chains" value="A=1-152"/>
</dbReference>
<dbReference type="PDB" id="4YLZ">
    <property type="method" value="X-ray"/>
    <property type="resolution" value="2.10 A"/>
    <property type="chains" value="A/B/C/D=171-323"/>
</dbReference>
<dbReference type="PDB" id="4YM0">
    <property type="method" value="X-ray"/>
    <property type="resolution" value="2.30 A"/>
    <property type="chains" value="A/B/C/D=171-323"/>
</dbReference>
<dbReference type="PDB" id="4YM1">
    <property type="method" value="X-ray"/>
    <property type="resolution" value="2.00 A"/>
    <property type="chains" value="A/B/C/D=171-323"/>
</dbReference>
<dbReference type="PDB" id="4YM2">
    <property type="method" value="X-ray"/>
    <property type="resolution" value="2.10 A"/>
    <property type="chains" value="A/B/C/D=171-323"/>
</dbReference>
<dbReference type="PDB" id="4YM3">
    <property type="method" value="X-ray"/>
    <property type="resolution" value="1.89 A"/>
    <property type="chains" value="A/B/C/D=171-323"/>
</dbReference>
<dbReference type="PDB" id="5CBL">
    <property type="method" value="X-ray"/>
    <property type="resolution" value="1.78 A"/>
    <property type="chains" value="A/B/C/D=179-323"/>
</dbReference>
<dbReference type="PDB" id="5DUU">
    <property type="method" value="X-ray"/>
    <property type="resolution" value="2.00 A"/>
    <property type="chains" value="A/B/C/D=1-155"/>
</dbReference>
<dbReference type="PDB" id="5DUV">
    <property type="method" value="X-ray"/>
    <property type="resolution" value="1.90 A"/>
    <property type="chains" value="A/B/C/D=1-155"/>
</dbReference>
<dbReference type="PDB" id="5DUW">
    <property type="method" value="X-ray"/>
    <property type="resolution" value="1.70 A"/>
    <property type="chains" value="A/B/C/D=1-155"/>
</dbReference>
<dbReference type="PDB" id="5DUX">
    <property type="method" value="X-ray"/>
    <property type="resolution" value="1.85 A"/>
    <property type="chains" value="A/B/C/D=1-155"/>
</dbReference>
<dbReference type="PDB" id="6WAB">
    <property type="method" value="X-ray"/>
    <property type="resolution" value="2.28 A"/>
    <property type="chains" value="A/B/C/D=184-323"/>
</dbReference>
<dbReference type="PDBsum" id="1X50"/>
<dbReference type="PDBsum" id="4XZP"/>
<dbReference type="PDBsum" id="4YLZ"/>
<dbReference type="PDBsum" id="4YM0"/>
<dbReference type="PDBsum" id="4YM1"/>
<dbReference type="PDBsum" id="4YM2"/>
<dbReference type="PDBsum" id="4YM3"/>
<dbReference type="PDBsum" id="5CBL"/>
<dbReference type="PDBsum" id="5DUU"/>
<dbReference type="PDBsum" id="5DUV"/>
<dbReference type="PDBsum" id="5DUW"/>
<dbReference type="PDBsum" id="5DUX"/>
<dbReference type="PDBsum" id="6WAB"/>
<dbReference type="SMR" id="P56470"/>
<dbReference type="BioGRID" id="110151">
    <property type="interactions" value="21"/>
</dbReference>
<dbReference type="FunCoup" id="P56470">
    <property type="interactions" value="153"/>
</dbReference>
<dbReference type="IntAct" id="P56470">
    <property type="interactions" value="17"/>
</dbReference>
<dbReference type="STRING" id="9606.ENSP00000302100"/>
<dbReference type="BindingDB" id="P56470"/>
<dbReference type="ChEMBL" id="CHEMBL1671608"/>
<dbReference type="UniLectin" id="P56470"/>
<dbReference type="GlyGen" id="P56470">
    <property type="glycosylation" value="3 sites, 4 N-linked glycans (1 site)"/>
</dbReference>
<dbReference type="iPTMnet" id="P56470"/>
<dbReference type="PhosphoSitePlus" id="P56470"/>
<dbReference type="BioMuta" id="LGALS4"/>
<dbReference type="DMDM" id="3024079"/>
<dbReference type="jPOST" id="P56470"/>
<dbReference type="MassIVE" id="P56470"/>
<dbReference type="PaxDb" id="9606-ENSP00000302100"/>
<dbReference type="PeptideAtlas" id="P56470"/>
<dbReference type="ProteomicsDB" id="56919"/>
<dbReference type="Antibodypedia" id="30166">
    <property type="antibodies" value="389 antibodies from 36 providers"/>
</dbReference>
<dbReference type="DNASU" id="3960"/>
<dbReference type="Ensembl" id="ENST00000307751.9">
    <property type="protein sequence ID" value="ENSP00000302100.3"/>
    <property type="gene ID" value="ENSG00000171747.9"/>
</dbReference>
<dbReference type="Ensembl" id="ENST00000634573.2">
    <property type="protein sequence ID" value="ENSP00000489411.1"/>
    <property type="gene ID" value="ENSG00000282992.2"/>
</dbReference>
<dbReference type="GeneID" id="3960"/>
<dbReference type="KEGG" id="hsa:3960"/>
<dbReference type="MANE-Select" id="ENST00000307751.9">
    <property type="protein sequence ID" value="ENSP00000302100.3"/>
    <property type="RefSeq nucleotide sequence ID" value="NM_006149.4"/>
    <property type="RefSeq protein sequence ID" value="NP_006140.1"/>
</dbReference>
<dbReference type="AGR" id="HGNC:6565"/>
<dbReference type="CTD" id="3960"/>
<dbReference type="DisGeNET" id="3960"/>
<dbReference type="GeneCards" id="LGALS4"/>
<dbReference type="HGNC" id="HGNC:6565">
    <property type="gene designation" value="LGALS4"/>
</dbReference>
<dbReference type="HPA" id="ENSG00000171747">
    <property type="expression patterns" value="Tissue enriched (intestine)"/>
</dbReference>
<dbReference type="MIM" id="602518">
    <property type="type" value="gene"/>
</dbReference>
<dbReference type="neXtProt" id="NX_P56470"/>
<dbReference type="OpenTargets" id="ENSG00000171747"/>
<dbReference type="PharmGKB" id="PA30342"/>
<dbReference type="VEuPathDB" id="HostDB:ENSG00000171747"/>
<dbReference type="eggNOG" id="KOG3587">
    <property type="taxonomic scope" value="Eukaryota"/>
</dbReference>
<dbReference type="GeneTree" id="ENSGT00940000160378"/>
<dbReference type="HOGENOM" id="CLU_037794_1_0_1"/>
<dbReference type="InParanoid" id="P56470"/>
<dbReference type="OMA" id="SFVINFM"/>
<dbReference type="OrthoDB" id="6251307at2759"/>
<dbReference type="PAN-GO" id="P56470">
    <property type="GO annotations" value="0 GO annotations based on evolutionary models"/>
</dbReference>
<dbReference type="PhylomeDB" id="P56470"/>
<dbReference type="TreeFam" id="TF315551"/>
<dbReference type="PathwayCommons" id="P56470"/>
<dbReference type="SignaLink" id="P56470"/>
<dbReference type="BioGRID-ORCS" id="3960">
    <property type="hits" value="15 hits in 1144 CRISPR screens"/>
</dbReference>
<dbReference type="ChiTaRS" id="LGALS4">
    <property type="organism name" value="human"/>
</dbReference>
<dbReference type="EvolutionaryTrace" id="P56470"/>
<dbReference type="GeneWiki" id="LGALS4"/>
<dbReference type="GenomeRNAi" id="3960"/>
<dbReference type="Pharos" id="P56470">
    <property type="development level" value="Tchem"/>
</dbReference>
<dbReference type="PRO" id="PR:P56470"/>
<dbReference type="Proteomes" id="UP000005640">
    <property type="component" value="Chromosome 19"/>
</dbReference>
<dbReference type="RNAct" id="P56470">
    <property type="molecule type" value="protein"/>
</dbReference>
<dbReference type="Bgee" id="ENSG00000171747">
    <property type="expression patterns" value="Expressed in mucosa of transverse colon and 95 other cell types or tissues"/>
</dbReference>
<dbReference type="ExpressionAtlas" id="P56470">
    <property type="expression patterns" value="baseline and differential"/>
</dbReference>
<dbReference type="GO" id="GO:0062023">
    <property type="term" value="C:collagen-containing extracellular matrix"/>
    <property type="evidence" value="ECO:0007005"/>
    <property type="project" value="BHF-UCL"/>
</dbReference>
<dbReference type="GO" id="GO:0005829">
    <property type="term" value="C:cytosol"/>
    <property type="evidence" value="ECO:0000304"/>
    <property type="project" value="ProtInc"/>
</dbReference>
<dbReference type="GO" id="GO:0005615">
    <property type="term" value="C:extracellular space"/>
    <property type="evidence" value="ECO:0007669"/>
    <property type="project" value="Ensembl"/>
</dbReference>
<dbReference type="GO" id="GO:0005886">
    <property type="term" value="C:plasma membrane"/>
    <property type="evidence" value="ECO:0000304"/>
    <property type="project" value="ProtInc"/>
</dbReference>
<dbReference type="GO" id="GO:0030246">
    <property type="term" value="F:carbohydrate binding"/>
    <property type="evidence" value="ECO:0000318"/>
    <property type="project" value="GO_Central"/>
</dbReference>
<dbReference type="GO" id="GO:0016936">
    <property type="term" value="F:galactoside binding"/>
    <property type="evidence" value="ECO:0007669"/>
    <property type="project" value="Ensembl"/>
</dbReference>
<dbReference type="GO" id="GO:0002780">
    <property type="term" value="P:antibacterial peptide biosynthetic process"/>
    <property type="evidence" value="ECO:0007669"/>
    <property type="project" value="Ensembl"/>
</dbReference>
<dbReference type="GO" id="GO:0007155">
    <property type="term" value="P:cell adhesion"/>
    <property type="evidence" value="ECO:0000304"/>
    <property type="project" value="ProtInc"/>
</dbReference>
<dbReference type="CDD" id="cd00070">
    <property type="entry name" value="GLECT"/>
    <property type="match status" value="2"/>
</dbReference>
<dbReference type="FunFam" id="2.60.120.200:FF:000124">
    <property type="entry name" value="Galectin-4"/>
    <property type="match status" value="2"/>
</dbReference>
<dbReference type="Gene3D" id="2.60.120.200">
    <property type="match status" value="2"/>
</dbReference>
<dbReference type="InterPro" id="IPR013320">
    <property type="entry name" value="ConA-like_dom_sf"/>
</dbReference>
<dbReference type="InterPro" id="IPR044156">
    <property type="entry name" value="Galectin-like"/>
</dbReference>
<dbReference type="InterPro" id="IPR001079">
    <property type="entry name" value="Galectin_CRD"/>
</dbReference>
<dbReference type="PANTHER" id="PTHR11346">
    <property type="entry name" value="GALECTIN"/>
    <property type="match status" value="1"/>
</dbReference>
<dbReference type="PANTHER" id="PTHR11346:SF32">
    <property type="entry name" value="GALECTIN-4"/>
    <property type="match status" value="1"/>
</dbReference>
<dbReference type="Pfam" id="PF00337">
    <property type="entry name" value="Gal-bind_lectin"/>
    <property type="match status" value="2"/>
</dbReference>
<dbReference type="SMART" id="SM00908">
    <property type="entry name" value="Gal-bind_lectin"/>
    <property type="match status" value="2"/>
</dbReference>
<dbReference type="SMART" id="SM00276">
    <property type="entry name" value="GLECT"/>
    <property type="match status" value="2"/>
</dbReference>
<dbReference type="SUPFAM" id="SSF49899">
    <property type="entry name" value="Concanavalin A-like lectins/glucanases"/>
    <property type="match status" value="2"/>
</dbReference>
<dbReference type="PROSITE" id="PS51304">
    <property type="entry name" value="GALECTIN"/>
    <property type="match status" value="2"/>
</dbReference>
<keyword id="KW-0002">3D-structure</keyword>
<keyword id="KW-0430">Lectin</keyword>
<keyword id="KW-0597">Phosphoprotein</keyword>
<keyword id="KW-1267">Proteomics identification</keyword>
<keyword id="KW-1185">Reference proteome</keyword>
<keyword id="KW-0677">Repeat</keyword>
<reference key="1">
    <citation type="submission" date="1997-09" db="EMBL/GenBank/DDBJ databases">
        <authorList>
            <person name="Kato S."/>
        </authorList>
    </citation>
    <scope>NUCLEOTIDE SEQUENCE [MRNA]</scope>
    <source>
        <tissue>Gastric carcinoma</tissue>
    </source>
</reference>
<reference key="2">
    <citation type="journal article" date="1997" name="Eur. J. Biochem.">
        <title>Cloning and expression of the mRNA of human galectin-4, an S-type lectin down-regulated in colorectal cancer.</title>
        <authorList>
            <person name="Rechreche H."/>
            <person name="Mallo G.V."/>
            <person name="Montalto G."/>
            <person name="Dagorn J.-C."/>
            <person name="Iovanna J.L."/>
        </authorList>
    </citation>
    <scope>NUCLEOTIDE SEQUENCE [MRNA]</scope>
    <source>
        <tissue>Colon carcinoma</tissue>
    </source>
</reference>
<reference key="3">
    <citation type="journal article" date="1997" name="J. Biol. Chem.">
        <title>Strikingly different localization of galectin-3 and galectin-4 in human colon adenocarcinoma T84 cells. Galectin-4 is localized at sites of cell adhesion.</title>
        <authorList>
            <person name="Huflejt M.E."/>
            <person name="Jordan E.T."/>
            <person name="Gitt M.A."/>
            <person name="Barondes S.H."/>
            <person name="Leffler H."/>
        </authorList>
    </citation>
    <scope>NUCLEOTIDE SEQUENCE [MRNA]</scope>
</reference>
<reference key="4">
    <citation type="journal article" date="2004" name="Genome Res.">
        <title>The status, quality, and expansion of the NIH full-length cDNA project: the Mammalian Gene Collection (MGC).</title>
        <authorList>
            <consortium name="The MGC Project Team"/>
        </authorList>
    </citation>
    <scope>NUCLEOTIDE SEQUENCE [LARGE SCALE MRNA]</scope>
    <source>
        <tissue>Colon</tissue>
        <tissue>Skin</tissue>
    </source>
</reference>
<reference key="5">
    <citation type="submission" date="2005-11" db="PDB data bank">
        <title>Solution structure of the C-terminal Gal-bind lectin domain from human galectin-4.</title>
        <authorList>
            <consortium name="RIKEN structural genomics initiative (RSGI)"/>
        </authorList>
    </citation>
    <scope>STRUCTURE BY NMR OF 173-323</scope>
</reference>